<gene>
    <name evidence="1" type="primary">ispF</name>
    <name type="ordered locus">DET0060</name>
</gene>
<keyword id="KW-0414">Isoprene biosynthesis</keyword>
<keyword id="KW-0456">Lyase</keyword>
<keyword id="KW-0479">Metal-binding</keyword>
<comment type="function">
    <text evidence="1">Involved in the biosynthesis of isopentenyl diphosphate (IPP) and dimethylallyl diphosphate (DMAPP), two major building blocks of isoprenoid compounds. Catalyzes the conversion of 4-diphosphocytidyl-2-C-methyl-D-erythritol 2-phosphate (CDP-ME2P) to 2-C-methyl-D-erythritol 2,4-cyclodiphosphate (ME-CPP) with a corresponding release of cytidine 5-monophosphate (CMP).</text>
</comment>
<comment type="catalytic activity">
    <reaction evidence="1">
        <text>4-CDP-2-C-methyl-D-erythritol 2-phosphate = 2-C-methyl-D-erythritol 2,4-cyclic diphosphate + CMP</text>
        <dbReference type="Rhea" id="RHEA:23864"/>
        <dbReference type="ChEBI" id="CHEBI:57919"/>
        <dbReference type="ChEBI" id="CHEBI:58483"/>
        <dbReference type="ChEBI" id="CHEBI:60377"/>
        <dbReference type="EC" id="4.6.1.12"/>
    </reaction>
</comment>
<comment type="cofactor">
    <cofactor evidence="1">
        <name>a divalent metal cation</name>
        <dbReference type="ChEBI" id="CHEBI:60240"/>
    </cofactor>
    <text evidence="1">Binds 1 divalent metal cation per subunit.</text>
</comment>
<comment type="pathway">
    <text evidence="1">Isoprenoid biosynthesis; isopentenyl diphosphate biosynthesis via DXP pathway; isopentenyl diphosphate from 1-deoxy-D-xylulose 5-phosphate: step 4/6.</text>
</comment>
<comment type="subunit">
    <text evidence="1">Homotrimer.</text>
</comment>
<comment type="similarity">
    <text evidence="1">Belongs to the IspF family.</text>
</comment>
<protein>
    <recommendedName>
        <fullName evidence="1">2-C-methyl-D-erythritol 2,4-cyclodiphosphate synthase</fullName>
        <shortName evidence="1">MECDP-synthase</shortName>
        <shortName evidence="1">MECPP-synthase</shortName>
        <shortName evidence="1">MECPS</shortName>
        <ecNumber evidence="1">4.6.1.12</ecNumber>
    </recommendedName>
</protein>
<proteinExistence type="inferred from homology"/>
<name>ISPF_DEHM1</name>
<organism>
    <name type="scientific">Dehalococcoides mccartyi (strain ATCC BAA-2266 / KCTC 15142 / 195)</name>
    <name type="common">Dehalococcoides ethenogenes (strain 195)</name>
    <dbReference type="NCBI Taxonomy" id="243164"/>
    <lineage>
        <taxon>Bacteria</taxon>
        <taxon>Bacillati</taxon>
        <taxon>Chloroflexota</taxon>
        <taxon>Dehalococcoidia</taxon>
        <taxon>Dehalococcoidales</taxon>
        <taxon>Dehalococcoidaceae</taxon>
        <taxon>Dehalococcoides</taxon>
    </lineage>
</organism>
<accession>Q3ZAD6</accession>
<reference key="1">
    <citation type="journal article" date="2005" name="Science">
        <title>Genome sequence of the PCE-dechlorinating bacterium Dehalococcoides ethenogenes.</title>
        <authorList>
            <person name="Seshadri R."/>
            <person name="Adrian L."/>
            <person name="Fouts D.E."/>
            <person name="Eisen J.A."/>
            <person name="Phillippy A.M."/>
            <person name="Methe B.A."/>
            <person name="Ward N.L."/>
            <person name="Nelson W.C."/>
            <person name="DeBoy R.T."/>
            <person name="Khouri H.M."/>
            <person name="Kolonay J.F."/>
            <person name="Dodson R.J."/>
            <person name="Daugherty S.C."/>
            <person name="Brinkac L.M."/>
            <person name="Sullivan S.A."/>
            <person name="Madupu R."/>
            <person name="Nelson K.E."/>
            <person name="Kang K.H."/>
            <person name="Impraim M."/>
            <person name="Tran K."/>
            <person name="Robinson J.M."/>
            <person name="Forberger H.A."/>
            <person name="Fraser C.M."/>
            <person name="Zinder S.H."/>
            <person name="Heidelberg J.F."/>
        </authorList>
    </citation>
    <scope>NUCLEOTIDE SEQUENCE [LARGE SCALE GENOMIC DNA]</scope>
    <source>
        <strain>ATCC BAA-2266 / KCTC 15142 / 195</strain>
    </source>
</reference>
<evidence type="ECO:0000255" key="1">
    <source>
        <dbReference type="HAMAP-Rule" id="MF_00107"/>
    </source>
</evidence>
<dbReference type="EC" id="4.6.1.12" evidence="1"/>
<dbReference type="EMBL" id="CP000027">
    <property type="protein sequence ID" value="AAW39073.1"/>
    <property type="molecule type" value="Genomic_DNA"/>
</dbReference>
<dbReference type="RefSeq" id="WP_010935868.1">
    <property type="nucleotide sequence ID" value="NC_002936.3"/>
</dbReference>
<dbReference type="SMR" id="Q3ZAD6"/>
<dbReference type="FunCoup" id="Q3ZAD6">
    <property type="interactions" value="285"/>
</dbReference>
<dbReference type="STRING" id="243164.DET0060"/>
<dbReference type="GeneID" id="3229030"/>
<dbReference type="KEGG" id="det:DET0060"/>
<dbReference type="PATRIC" id="fig|243164.10.peg.56"/>
<dbReference type="eggNOG" id="COG0245">
    <property type="taxonomic scope" value="Bacteria"/>
</dbReference>
<dbReference type="HOGENOM" id="CLU_084630_2_0_0"/>
<dbReference type="InParanoid" id="Q3ZAD6"/>
<dbReference type="UniPathway" id="UPA00056">
    <property type="reaction ID" value="UER00095"/>
</dbReference>
<dbReference type="Proteomes" id="UP000008289">
    <property type="component" value="Chromosome"/>
</dbReference>
<dbReference type="GO" id="GO:0008685">
    <property type="term" value="F:2-C-methyl-D-erythritol 2,4-cyclodiphosphate synthase activity"/>
    <property type="evidence" value="ECO:0007669"/>
    <property type="project" value="UniProtKB-UniRule"/>
</dbReference>
<dbReference type="GO" id="GO:0046872">
    <property type="term" value="F:metal ion binding"/>
    <property type="evidence" value="ECO:0007669"/>
    <property type="project" value="UniProtKB-KW"/>
</dbReference>
<dbReference type="GO" id="GO:0019288">
    <property type="term" value="P:isopentenyl diphosphate biosynthetic process, methylerythritol 4-phosphate pathway"/>
    <property type="evidence" value="ECO:0007669"/>
    <property type="project" value="UniProtKB-UniRule"/>
</dbReference>
<dbReference type="GO" id="GO:0016114">
    <property type="term" value="P:terpenoid biosynthetic process"/>
    <property type="evidence" value="ECO:0007669"/>
    <property type="project" value="InterPro"/>
</dbReference>
<dbReference type="CDD" id="cd00554">
    <property type="entry name" value="MECDP_synthase"/>
    <property type="match status" value="1"/>
</dbReference>
<dbReference type="Gene3D" id="3.30.1330.50">
    <property type="entry name" value="2-C-methyl-D-erythritol 2,4-cyclodiphosphate synthase"/>
    <property type="match status" value="1"/>
</dbReference>
<dbReference type="HAMAP" id="MF_00107">
    <property type="entry name" value="IspF"/>
    <property type="match status" value="1"/>
</dbReference>
<dbReference type="InterPro" id="IPR003526">
    <property type="entry name" value="MECDP_synthase"/>
</dbReference>
<dbReference type="InterPro" id="IPR020555">
    <property type="entry name" value="MECDP_synthase_CS"/>
</dbReference>
<dbReference type="InterPro" id="IPR036571">
    <property type="entry name" value="MECDP_synthase_sf"/>
</dbReference>
<dbReference type="NCBIfam" id="TIGR00151">
    <property type="entry name" value="ispF"/>
    <property type="match status" value="1"/>
</dbReference>
<dbReference type="PANTHER" id="PTHR43181">
    <property type="entry name" value="2-C-METHYL-D-ERYTHRITOL 2,4-CYCLODIPHOSPHATE SYNTHASE, CHLOROPLASTIC"/>
    <property type="match status" value="1"/>
</dbReference>
<dbReference type="PANTHER" id="PTHR43181:SF1">
    <property type="entry name" value="2-C-METHYL-D-ERYTHRITOL 2,4-CYCLODIPHOSPHATE SYNTHASE, CHLOROPLASTIC"/>
    <property type="match status" value="1"/>
</dbReference>
<dbReference type="Pfam" id="PF02542">
    <property type="entry name" value="YgbB"/>
    <property type="match status" value="1"/>
</dbReference>
<dbReference type="SUPFAM" id="SSF69765">
    <property type="entry name" value="IpsF-like"/>
    <property type="match status" value="1"/>
</dbReference>
<dbReference type="PROSITE" id="PS01350">
    <property type="entry name" value="ISPF"/>
    <property type="match status" value="1"/>
</dbReference>
<feature type="chain" id="PRO_0000237720" description="2-C-methyl-D-erythritol 2,4-cyclodiphosphate synthase">
    <location>
        <begin position="1"/>
        <end position="157"/>
    </location>
</feature>
<feature type="binding site" evidence="1">
    <location>
        <begin position="8"/>
        <end position="10"/>
    </location>
    <ligand>
        <name>4-CDP-2-C-methyl-D-erythritol 2-phosphate</name>
        <dbReference type="ChEBI" id="CHEBI:57919"/>
    </ligand>
</feature>
<feature type="binding site" evidence="1">
    <location>
        <position position="8"/>
    </location>
    <ligand>
        <name>a divalent metal cation</name>
        <dbReference type="ChEBI" id="CHEBI:60240"/>
    </ligand>
</feature>
<feature type="binding site" evidence="1">
    <location>
        <position position="10"/>
    </location>
    <ligand>
        <name>a divalent metal cation</name>
        <dbReference type="ChEBI" id="CHEBI:60240"/>
    </ligand>
</feature>
<feature type="binding site" evidence="1">
    <location>
        <position position="42"/>
    </location>
    <ligand>
        <name>a divalent metal cation</name>
        <dbReference type="ChEBI" id="CHEBI:60240"/>
    </ligand>
</feature>
<feature type="binding site" evidence="1">
    <location>
        <begin position="56"/>
        <end position="58"/>
    </location>
    <ligand>
        <name>4-CDP-2-C-methyl-D-erythritol 2-phosphate</name>
        <dbReference type="ChEBI" id="CHEBI:57919"/>
    </ligand>
</feature>
<feature type="binding site" evidence="1">
    <location>
        <begin position="132"/>
        <end position="135"/>
    </location>
    <ligand>
        <name>4-CDP-2-C-methyl-D-erythritol 2-phosphate</name>
        <dbReference type="ChEBI" id="CHEBI:57919"/>
    </ligand>
</feature>
<feature type="binding site" evidence="1">
    <location>
        <position position="139"/>
    </location>
    <ligand>
        <name>4-CDP-2-C-methyl-D-erythritol 2-phosphate</name>
        <dbReference type="ChEBI" id="CHEBI:57919"/>
    </ligand>
</feature>
<feature type="binding site" evidence="1">
    <location>
        <position position="142"/>
    </location>
    <ligand>
        <name>4-CDP-2-C-methyl-D-erythritol 2-phosphate</name>
        <dbReference type="ChEBI" id="CHEBI:57919"/>
    </ligand>
</feature>
<feature type="site" description="Transition state stabilizer" evidence="1">
    <location>
        <position position="133"/>
    </location>
</feature>
<sequence>MRIGNGYDVHRLAPGQKLVLGGVEIPFECGLIGWSDADVLTHAIMDSLLGAAALGDIGLYFPPGDPKFKGISSLKLLEQVTALLAEKGFGIINVDSVIVAEEPKLRGHVDTMRKHLAKAMGIDPGRVGIKASTSEQLGFVGREEGMAAWAVALVDEK</sequence>